<keyword id="KW-0067">ATP-binding</keyword>
<keyword id="KW-0997">Cell inner membrane</keyword>
<keyword id="KW-1003">Cell membrane</keyword>
<keyword id="KW-0472">Membrane</keyword>
<keyword id="KW-0547">Nucleotide-binding</keyword>
<keyword id="KW-0762">Sugar transport</keyword>
<keyword id="KW-1278">Translocase</keyword>
<keyword id="KW-0813">Transport</keyword>
<feature type="chain" id="PRO_0000289793" description="sn-glycerol-3-phosphate import ATP-binding protein UgpC">
    <location>
        <begin position="1"/>
        <end position="357"/>
    </location>
</feature>
<feature type="domain" description="ABC transporter" evidence="1">
    <location>
        <begin position="4"/>
        <end position="235"/>
    </location>
</feature>
<feature type="binding site" evidence="1">
    <location>
        <begin position="37"/>
        <end position="44"/>
    </location>
    <ligand>
        <name>ATP</name>
        <dbReference type="ChEBI" id="CHEBI:30616"/>
    </ligand>
</feature>
<organism>
    <name type="scientific">Yersinia pseudotuberculosis serotype I (strain IP32953)</name>
    <dbReference type="NCBI Taxonomy" id="273123"/>
    <lineage>
        <taxon>Bacteria</taxon>
        <taxon>Pseudomonadati</taxon>
        <taxon>Pseudomonadota</taxon>
        <taxon>Gammaproteobacteria</taxon>
        <taxon>Enterobacterales</taxon>
        <taxon>Yersiniaceae</taxon>
        <taxon>Yersinia</taxon>
    </lineage>
</organism>
<gene>
    <name evidence="1" type="primary">ugpC</name>
    <name type="ordered locus">YPTB0241</name>
</gene>
<accession>Q66FU4</accession>
<dbReference type="EC" id="7.6.2.10" evidence="1"/>
<dbReference type="EMBL" id="BX936398">
    <property type="protein sequence ID" value="CAH19481.1"/>
    <property type="molecule type" value="Genomic_DNA"/>
</dbReference>
<dbReference type="RefSeq" id="WP_011191533.1">
    <property type="nucleotide sequence ID" value="NC_006155.1"/>
</dbReference>
<dbReference type="SMR" id="Q66FU4"/>
<dbReference type="GeneID" id="49787777"/>
<dbReference type="KEGG" id="ypo:BZ17_2342"/>
<dbReference type="KEGG" id="yps:YPTB0241"/>
<dbReference type="PATRIC" id="fig|273123.14.peg.2464"/>
<dbReference type="Proteomes" id="UP000001011">
    <property type="component" value="Chromosome"/>
</dbReference>
<dbReference type="GO" id="GO:0055052">
    <property type="term" value="C:ATP-binding cassette (ABC) transporter complex, substrate-binding subunit-containing"/>
    <property type="evidence" value="ECO:0007669"/>
    <property type="project" value="TreeGrafter"/>
</dbReference>
<dbReference type="GO" id="GO:0015430">
    <property type="term" value="F:ABC-type glycerol-3-phosphate transporter activity"/>
    <property type="evidence" value="ECO:0007669"/>
    <property type="project" value="UniProtKB-EC"/>
</dbReference>
<dbReference type="GO" id="GO:0005524">
    <property type="term" value="F:ATP binding"/>
    <property type="evidence" value="ECO:0007669"/>
    <property type="project" value="UniProtKB-KW"/>
</dbReference>
<dbReference type="GO" id="GO:0016887">
    <property type="term" value="F:ATP hydrolysis activity"/>
    <property type="evidence" value="ECO:0007669"/>
    <property type="project" value="InterPro"/>
</dbReference>
<dbReference type="GO" id="GO:0008643">
    <property type="term" value="P:carbohydrate transport"/>
    <property type="evidence" value="ECO:0007669"/>
    <property type="project" value="InterPro"/>
</dbReference>
<dbReference type="GO" id="GO:0001407">
    <property type="term" value="P:glycerophosphodiester transmembrane transport"/>
    <property type="evidence" value="ECO:0007669"/>
    <property type="project" value="TreeGrafter"/>
</dbReference>
<dbReference type="CDD" id="cd03301">
    <property type="entry name" value="ABC_MalK_N"/>
    <property type="match status" value="1"/>
</dbReference>
<dbReference type="FunFam" id="3.40.50.300:FF:000042">
    <property type="entry name" value="Maltose/maltodextrin ABC transporter, ATP-binding protein"/>
    <property type="match status" value="1"/>
</dbReference>
<dbReference type="FunFam" id="2.40.50.100:FF:000032">
    <property type="entry name" value="sn-glycerol-3-phosphate import ATP-binding protein UgpC"/>
    <property type="match status" value="1"/>
</dbReference>
<dbReference type="Gene3D" id="2.40.50.100">
    <property type="match status" value="1"/>
</dbReference>
<dbReference type="Gene3D" id="2.40.50.140">
    <property type="entry name" value="Nucleic acid-binding proteins"/>
    <property type="match status" value="1"/>
</dbReference>
<dbReference type="Gene3D" id="3.40.50.300">
    <property type="entry name" value="P-loop containing nucleotide triphosphate hydrolases"/>
    <property type="match status" value="1"/>
</dbReference>
<dbReference type="InterPro" id="IPR003593">
    <property type="entry name" value="AAA+_ATPase"/>
</dbReference>
<dbReference type="InterPro" id="IPR003439">
    <property type="entry name" value="ABC_transporter-like_ATP-bd"/>
</dbReference>
<dbReference type="InterPro" id="IPR017871">
    <property type="entry name" value="ABC_transporter-like_CS"/>
</dbReference>
<dbReference type="InterPro" id="IPR015855">
    <property type="entry name" value="ABC_transpr_MalK-like"/>
</dbReference>
<dbReference type="InterPro" id="IPR047641">
    <property type="entry name" value="ABC_transpr_MalK/UgpC-like"/>
</dbReference>
<dbReference type="InterPro" id="IPR008995">
    <property type="entry name" value="Mo/tungstate-bd_C_term_dom"/>
</dbReference>
<dbReference type="InterPro" id="IPR012340">
    <property type="entry name" value="NA-bd_OB-fold"/>
</dbReference>
<dbReference type="InterPro" id="IPR040582">
    <property type="entry name" value="OB_MalK-like"/>
</dbReference>
<dbReference type="InterPro" id="IPR027417">
    <property type="entry name" value="P-loop_NTPase"/>
</dbReference>
<dbReference type="NCBIfam" id="NF008653">
    <property type="entry name" value="PRK11650.1"/>
    <property type="match status" value="1"/>
</dbReference>
<dbReference type="PANTHER" id="PTHR43875">
    <property type="entry name" value="MALTODEXTRIN IMPORT ATP-BINDING PROTEIN MSMX"/>
    <property type="match status" value="1"/>
</dbReference>
<dbReference type="PANTHER" id="PTHR43875:SF12">
    <property type="entry name" value="SN-GLYCEROL-3-PHOSPHATE IMPORT ATP-BINDING PROTEIN UGPC"/>
    <property type="match status" value="1"/>
</dbReference>
<dbReference type="Pfam" id="PF00005">
    <property type="entry name" value="ABC_tran"/>
    <property type="match status" value="1"/>
</dbReference>
<dbReference type="Pfam" id="PF17912">
    <property type="entry name" value="OB_MalK"/>
    <property type="match status" value="1"/>
</dbReference>
<dbReference type="SMART" id="SM00382">
    <property type="entry name" value="AAA"/>
    <property type="match status" value="1"/>
</dbReference>
<dbReference type="SUPFAM" id="SSF50331">
    <property type="entry name" value="MOP-like"/>
    <property type="match status" value="1"/>
</dbReference>
<dbReference type="SUPFAM" id="SSF52540">
    <property type="entry name" value="P-loop containing nucleoside triphosphate hydrolases"/>
    <property type="match status" value="1"/>
</dbReference>
<dbReference type="PROSITE" id="PS00211">
    <property type="entry name" value="ABC_TRANSPORTER_1"/>
    <property type="match status" value="1"/>
</dbReference>
<dbReference type="PROSITE" id="PS50893">
    <property type="entry name" value="ABC_TRANSPORTER_2"/>
    <property type="match status" value="1"/>
</dbReference>
<dbReference type="PROSITE" id="PS51315">
    <property type="entry name" value="UGPC"/>
    <property type="match status" value="1"/>
</dbReference>
<proteinExistence type="inferred from homology"/>
<comment type="function">
    <text evidence="1">Part of the ABC transporter complex UgpBAEC involved in sn-glycerol-3-phosphate (G3P) import. Responsible for energy coupling to the transport system.</text>
</comment>
<comment type="catalytic activity">
    <reaction evidence="1">
        <text>sn-glycerol 3-phosphate(out) + ATP + H2O = sn-glycerol 3-phosphate(in) + ADP + phosphate + H(+)</text>
        <dbReference type="Rhea" id="RHEA:21668"/>
        <dbReference type="ChEBI" id="CHEBI:15377"/>
        <dbReference type="ChEBI" id="CHEBI:15378"/>
        <dbReference type="ChEBI" id="CHEBI:30616"/>
        <dbReference type="ChEBI" id="CHEBI:43474"/>
        <dbReference type="ChEBI" id="CHEBI:57597"/>
        <dbReference type="ChEBI" id="CHEBI:456216"/>
        <dbReference type="EC" id="7.6.2.10"/>
    </reaction>
</comment>
<comment type="subunit">
    <text evidence="1">The complex is composed of two ATP-binding proteins (UgpC), two transmembrane proteins (UgpA and UgpE) and a solute-binding protein (UgpB).</text>
</comment>
<comment type="subcellular location">
    <subcellularLocation>
        <location evidence="1">Cell inner membrane</location>
        <topology evidence="1">Peripheral membrane protein</topology>
    </subcellularLocation>
</comment>
<comment type="similarity">
    <text evidence="1">Belongs to the ABC transporter superfamily. sn-glycerol-3-phosphate importer (TC 3.A.1.1.3) family.</text>
</comment>
<protein>
    <recommendedName>
        <fullName evidence="1">sn-glycerol-3-phosphate import ATP-binding protein UgpC</fullName>
        <ecNumber evidence="1">7.6.2.10</ecNumber>
    </recommendedName>
</protein>
<evidence type="ECO:0000255" key="1">
    <source>
        <dbReference type="HAMAP-Rule" id="MF_01727"/>
    </source>
</evidence>
<reference key="1">
    <citation type="journal article" date="2004" name="Proc. Natl. Acad. Sci. U.S.A.">
        <title>Insights into the evolution of Yersinia pestis through whole-genome comparison with Yersinia pseudotuberculosis.</title>
        <authorList>
            <person name="Chain P.S.G."/>
            <person name="Carniel E."/>
            <person name="Larimer F.W."/>
            <person name="Lamerdin J."/>
            <person name="Stoutland P.O."/>
            <person name="Regala W.M."/>
            <person name="Georgescu A.M."/>
            <person name="Vergez L.M."/>
            <person name="Land M.L."/>
            <person name="Motin V.L."/>
            <person name="Brubaker R.R."/>
            <person name="Fowler J."/>
            <person name="Hinnebusch J."/>
            <person name="Marceau M."/>
            <person name="Medigue C."/>
            <person name="Simonet M."/>
            <person name="Chenal-Francisque V."/>
            <person name="Souza B."/>
            <person name="Dacheux D."/>
            <person name="Elliott J.M."/>
            <person name="Derbise A."/>
            <person name="Hauser L.J."/>
            <person name="Garcia E."/>
        </authorList>
    </citation>
    <scope>NUCLEOTIDE SEQUENCE [LARGE SCALE GENOMIC DNA]</scope>
    <source>
        <strain>IP32953</strain>
    </source>
</reference>
<name>UGPC_YERPS</name>
<sequence length="357" mass="39501">MACLKLQAVTKSYDGVTPVIKQIDLDVADGEFIVMVGPSGCGKSTLLRMVAGLERTTTGDIYIGDQRVTDLEPKDRGIAMVFQNYALYPHMNVFDNMAYGLKIRGFGKEQIRQRVDEAARILELQPLLKRKPRELSGGQRQRVAMGRAIVREPAVFLFDEPLSNLDAKLRVQMRLELQQLHRRLKTTSLYVTHDQVEAMTLAQRVIVMNKGVAEQIGTPSEVYKRPASLFVASFIGSPAMNLLDGTVSPDGRTFILSDGLTLPLEIPQPQWGGRRLTLGIRPEHIQQTTSAQGVPMNLLTLELLGADNLAHGLWGGQSIIARLSHEEMPVAGSTLHLYLPPAALHFFDTDSGLRIEP</sequence>